<feature type="chain" id="PRO_1000196476" description="Small ribosomal subunit protein bS16">
    <location>
        <begin position="1"/>
        <end position="86"/>
    </location>
</feature>
<keyword id="KW-0687">Ribonucleoprotein</keyword>
<keyword id="KW-0689">Ribosomal protein</keyword>
<name>RS16_STRM5</name>
<gene>
    <name evidence="1" type="primary">rpsP</name>
    <name type="ordered locus">Smal_1153</name>
</gene>
<protein>
    <recommendedName>
        <fullName evidence="1">Small ribosomal subunit protein bS16</fullName>
    </recommendedName>
    <alternativeName>
        <fullName evidence="2">30S ribosomal protein S16</fullName>
    </alternativeName>
</protein>
<reference key="1">
    <citation type="submission" date="2008-06" db="EMBL/GenBank/DDBJ databases">
        <title>Complete sequence of Stenotrophomonas maltophilia R551-3.</title>
        <authorList>
            <consortium name="US DOE Joint Genome Institute"/>
            <person name="Lucas S."/>
            <person name="Copeland A."/>
            <person name="Lapidus A."/>
            <person name="Glavina del Rio T."/>
            <person name="Dalin E."/>
            <person name="Tice H."/>
            <person name="Pitluck S."/>
            <person name="Chain P."/>
            <person name="Malfatti S."/>
            <person name="Shin M."/>
            <person name="Vergez L."/>
            <person name="Lang D."/>
            <person name="Schmutz J."/>
            <person name="Larimer F."/>
            <person name="Land M."/>
            <person name="Hauser L."/>
            <person name="Kyrpides N."/>
            <person name="Mikhailova N."/>
            <person name="Taghavi S."/>
            <person name="Monchy S."/>
            <person name="Newman L."/>
            <person name="Vangronsveld J."/>
            <person name="van der Lelie D."/>
            <person name="Richardson P."/>
        </authorList>
    </citation>
    <scope>NUCLEOTIDE SEQUENCE [LARGE SCALE GENOMIC DNA]</scope>
    <source>
        <strain>R551-3</strain>
    </source>
</reference>
<sequence length="86" mass="9669">MVKIRLTRGGAKKRPFYHIIVTDVRSARDGRNIERVGFYNPVAQGGEKRIELDLARVDHWVKNGAQPTEKVRNLIKEATKSQAAAA</sequence>
<accession>B4SPH1</accession>
<dbReference type="EMBL" id="CP001111">
    <property type="protein sequence ID" value="ACF50858.1"/>
    <property type="molecule type" value="Genomic_DNA"/>
</dbReference>
<dbReference type="RefSeq" id="WP_012510436.1">
    <property type="nucleotide sequence ID" value="NC_011071.1"/>
</dbReference>
<dbReference type="SMR" id="B4SPH1"/>
<dbReference type="STRING" id="391008.Smal_1153"/>
<dbReference type="KEGG" id="smt:Smal_1153"/>
<dbReference type="eggNOG" id="COG0228">
    <property type="taxonomic scope" value="Bacteria"/>
</dbReference>
<dbReference type="HOGENOM" id="CLU_100590_5_1_6"/>
<dbReference type="OrthoDB" id="9807878at2"/>
<dbReference type="Proteomes" id="UP000001867">
    <property type="component" value="Chromosome"/>
</dbReference>
<dbReference type="GO" id="GO:0005737">
    <property type="term" value="C:cytoplasm"/>
    <property type="evidence" value="ECO:0007669"/>
    <property type="project" value="UniProtKB-ARBA"/>
</dbReference>
<dbReference type="GO" id="GO:0015935">
    <property type="term" value="C:small ribosomal subunit"/>
    <property type="evidence" value="ECO:0007669"/>
    <property type="project" value="TreeGrafter"/>
</dbReference>
<dbReference type="GO" id="GO:0003735">
    <property type="term" value="F:structural constituent of ribosome"/>
    <property type="evidence" value="ECO:0007669"/>
    <property type="project" value="InterPro"/>
</dbReference>
<dbReference type="GO" id="GO:0006412">
    <property type="term" value="P:translation"/>
    <property type="evidence" value="ECO:0007669"/>
    <property type="project" value="UniProtKB-UniRule"/>
</dbReference>
<dbReference type="FunFam" id="3.30.1320.10:FF:000008">
    <property type="entry name" value="30S ribosomal protein S16"/>
    <property type="match status" value="1"/>
</dbReference>
<dbReference type="Gene3D" id="3.30.1320.10">
    <property type="match status" value="1"/>
</dbReference>
<dbReference type="HAMAP" id="MF_00385">
    <property type="entry name" value="Ribosomal_bS16"/>
    <property type="match status" value="1"/>
</dbReference>
<dbReference type="InterPro" id="IPR000307">
    <property type="entry name" value="Ribosomal_bS16"/>
</dbReference>
<dbReference type="InterPro" id="IPR020592">
    <property type="entry name" value="Ribosomal_bS16_CS"/>
</dbReference>
<dbReference type="InterPro" id="IPR023803">
    <property type="entry name" value="Ribosomal_bS16_dom_sf"/>
</dbReference>
<dbReference type="NCBIfam" id="TIGR00002">
    <property type="entry name" value="S16"/>
    <property type="match status" value="1"/>
</dbReference>
<dbReference type="PANTHER" id="PTHR12919">
    <property type="entry name" value="30S RIBOSOMAL PROTEIN S16"/>
    <property type="match status" value="1"/>
</dbReference>
<dbReference type="PANTHER" id="PTHR12919:SF20">
    <property type="entry name" value="SMALL RIBOSOMAL SUBUNIT PROTEIN BS16M"/>
    <property type="match status" value="1"/>
</dbReference>
<dbReference type="Pfam" id="PF00886">
    <property type="entry name" value="Ribosomal_S16"/>
    <property type="match status" value="1"/>
</dbReference>
<dbReference type="SUPFAM" id="SSF54565">
    <property type="entry name" value="Ribosomal protein S16"/>
    <property type="match status" value="1"/>
</dbReference>
<dbReference type="PROSITE" id="PS00732">
    <property type="entry name" value="RIBOSOMAL_S16"/>
    <property type="match status" value="1"/>
</dbReference>
<comment type="similarity">
    <text evidence="1">Belongs to the bacterial ribosomal protein bS16 family.</text>
</comment>
<proteinExistence type="inferred from homology"/>
<organism>
    <name type="scientific">Stenotrophomonas maltophilia (strain R551-3)</name>
    <dbReference type="NCBI Taxonomy" id="391008"/>
    <lineage>
        <taxon>Bacteria</taxon>
        <taxon>Pseudomonadati</taxon>
        <taxon>Pseudomonadota</taxon>
        <taxon>Gammaproteobacteria</taxon>
        <taxon>Lysobacterales</taxon>
        <taxon>Lysobacteraceae</taxon>
        <taxon>Stenotrophomonas</taxon>
        <taxon>Stenotrophomonas maltophilia group</taxon>
    </lineage>
</organism>
<evidence type="ECO:0000255" key="1">
    <source>
        <dbReference type="HAMAP-Rule" id="MF_00385"/>
    </source>
</evidence>
<evidence type="ECO:0000305" key="2"/>